<evidence type="ECO:0000255" key="1">
    <source>
        <dbReference type="HAMAP-Rule" id="MF_00004"/>
    </source>
</evidence>
<organism>
    <name type="scientific">Trichodesmium erythraeum (strain IMS101)</name>
    <dbReference type="NCBI Taxonomy" id="203124"/>
    <lineage>
        <taxon>Bacteria</taxon>
        <taxon>Bacillati</taxon>
        <taxon>Cyanobacteriota</taxon>
        <taxon>Cyanophyceae</taxon>
        <taxon>Oscillatoriophycideae</taxon>
        <taxon>Oscillatoriales</taxon>
        <taxon>Microcoleaceae</taxon>
        <taxon>Trichodesmium</taxon>
    </lineage>
</organism>
<comment type="function">
    <text evidence="1">Catalyzes a salvage reaction resulting in the formation of AMP, that is energically less costly than de novo synthesis.</text>
</comment>
<comment type="catalytic activity">
    <reaction evidence="1">
        <text>AMP + diphosphate = 5-phospho-alpha-D-ribose 1-diphosphate + adenine</text>
        <dbReference type="Rhea" id="RHEA:16609"/>
        <dbReference type="ChEBI" id="CHEBI:16708"/>
        <dbReference type="ChEBI" id="CHEBI:33019"/>
        <dbReference type="ChEBI" id="CHEBI:58017"/>
        <dbReference type="ChEBI" id="CHEBI:456215"/>
        <dbReference type="EC" id="2.4.2.7"/>
    </reaction>
</comment>
<comment type="pathway">
    <text evidence="1">Purine metabolism; AMP biosynthesis via salvage pathway; AMP from adenine: step 1/1.</text>
</comment>
<comment type="subunit">
    <text evidence="1">Homodimer.</text>
</comment>
<comment type="subcellular location">
    <subcellularLocation>
        <location evidence="1">Cytoplasm</location>
    </subcellularLocation>
</comment>
<comment type="similarity">
    <text evidence="1">Belongs to the purine/pyrimidine phosphoribosyltransferase family.</text>
</comment>
<feature type="chain" id="PRO_1000000369" description="Adenine phosphoribosyltransferase">
    <location>
        <begin position="1"/>
        <end position="170"/>
    </location>
</feature>
<gene>
    <name evidence="1" type="primary">apt</name>
    <name type="ordered locus">Tery_0435</name>
</gene>
<sequence>MELKNLIREIPNFPKSGIIFRDITTLLSNTDGLHYTIDILTEKCLEFKPDYVVGIESRGFIFGMPLAYQLNVGFIPVRKPGKLPAEVYSVSYDLEYGQDSLEVHQDAMPAGSRVLVIDDLLATGGTAGATTQLIEKAKCNLVGFAFVIELKELGGREKLPKVPIISLIEY</sequence>
<dbReference type="EC" id="2.4.2.7" evidence="1"/>
<dbReference type="EMBL" id="CP000393">
    <property type="protein sequence ID" value="ABG49894.1"/>
    <property type="molecule type" value="Genomic_DNA"/>
</dbReference>
<dbReference type="RefSeq" id="WP_011610290.1">
    <property type="nucleotide sequence ID" value="NC_008312.1"/>
</dbReference>
<dbReference type="SMR" id="Q119D0"/>
<dbReference type="STRING" id="203124.Tery_0435"/>
<dbReference type="KEGG" id="ter:Tery_0435"/>
<dbReference type="eggNOG" id="COG0503">
    <property type="taxonomic scope" value="Bacteria"/>
</dbReference>
<dbReference type="HOGENOM" id="CLU_063339_3_0_3"/>
<dbReference type="OrthoDB" id="9803963at2"/>
<dbReference type="UniPathway" id="UPA00588">
    <property type="reaction ID" value="UER00646"/>
</dbReference>
<dbReference type="GO" id="GO:0005737">
    <property type="term" value="C:cytoplasm"/>
    <property type="evidence" value="ECO:0007669"/>
    <property type="project" value="UniProtKB-SubCell"/>
</dbReference>
<dbReference type="GO" id="GO:0002055">
    <property type="term" value="F:adenine binding"/>
    <property type="evidence" value="ECO:0007669"/>
    <property type="project" value="TreeGrafter"/>
</dbReference>
<dbReference type="GO" id="GO:0003999">
    <property type="term" value="F:adenine phosphoribosyltransferase activity"/>
    <property type="evidence" value="ECO:0007669"/>
    <property type="project" value="UniProtKB-UniRule"/>
</dbReference>
<dbReference type="GO" id="GO:0016208">
    <property type="term" value="F:AMP binding"/>
    <property type="evidence" value="ECO:0007669"/>
    <property type="project" value="TreeGrafter"/>
</dbReference>
<dbReference type="GO" id="GO:0006168">
    <property type="term" value="P:adenine salvage"/>
    <property type="evidence" value="ECO:0007669"/>
    <property type="project" value="InterPro"/>
</dbReference>
<dbReference type="GO" id="GO:0044209">
    <property type="term" value="P:AMP salvage"/>
    <property type="evidence" value="ECO:0007669"/>
    <property type="project" value="UniProtKB-UniRule"/>
</dbReference>
<dbReference type="GO" id="GO:0006166">
    <property type="term" value="P:purine ribonucleoside salvage"/>
    <property type="evidence" value="ECO:0007669"/>
    <property type="project" value="UniProtKB-KW"/>
</dbReference>
<dbReference type="CDD" id="cd06223">
    <property type="entry name" value="PRTases_typeI"/>
    <property type="match status" value="1"/>
</dbReference>
<dbReference type="FunFam" id="3.40.50.2020:FF:000004">
    <property type="entry name" value="Adenine phosphoribosyltransferase"/>
    <property type="match status" value="1"/>
</dbReference>
<dbReference type="Gene3D" id="3.40.50.2020">
    <property type="match status" value="1"/>
</dbReference>
<dbReference type="HAMAP" id="MF_00004">
    <property type="entry name" value="Aden_phosphoribosyltr"/>
    <property type="match status" value="1"/>
</dbReference>
<dbReference type="InterPro" id="IPR005764">
    <property type="entry name" value="Ade_phspho_trans"/>
</dbReference>
<dbReference type="InterPro" id="IPR000836">
    <property type="entry name" value="PRibTrfase_dom"/>
</dbReference>
<dbReference type="InterPro" id="IPR029057">
    <property type="entry name" value="PRTase-like"/>
</dbReference>
<dbReference type="InterPro" id="IPR050054">
    <property type="entry name" value="UPRTase/APRTase"/>
</dbReference>
<dbReference type="NCBIfam" id="TIGR01090">
    <property type="entry name" value="apt"/>
    <property type="match status" value="1"/>
</dbReference>
<dbReference type="NCBIfam" id="NF002634">
    <property type="entry name" value="PRK02304.1-3"/>
    <property type="match status" value="1"/>
</dbReference>
<dbReference type="NCBIfam" id="NF002636">
    <property type="entry name" value="PRK02304.1-5"/>
    <property type="match status" value="1"/>
</dbReference>
<dbReference type="PANTHER" id="PTHR32315">
    <property type="entry name" value="ADENINE PHOSPHORIBOSYLTRANSFERASE"/>
    <property type="match status" value="1"/>
</dbReference>
<dbReference type="PANTHER" id="PTHR32315:SF3">
    <property type="entry name" value="ADENINE PHOSPHORIBOSYLTRANSFERASE"/>
    <property type="match status" value="1"/>
</dbReference>
<dbReference type="Pfam" id="PF00156">
    <property type="entry name" value="Pribosyltran"/>
    <property type="match status" value="1"/>
</dbReference>
<dbReference type="SUPFAM" id="SSF53271">
    <property type="entry name" value="PRTase-like"/>
    <property type="match status" value="1"/>
</dbReference>
<dbReference type="PROSITE" id="PS00103">
    <property type="entry name" value="PUR_PYR_PR_TRANSFER"/>
    <property type="match status" value="1"/>
</dbReference>
<keyword id="KW-0963">Cytoplasm</keyword>
<keyword id="KW-0328">Glycosyltransferase</keyword>
<keyword id="KW-0660">Purine salvage</keyword>
<keyword id="KW-0808">Transferase</keyword>
<accession>Q119D0</accession>
<name>APT_TRIEI</name>
<reference key="1">
    <citation type="journal article" date="2015" name="Proc. Natl. Acad. Sci. U.S.A.">
        <title>Trichodesmium genome maintains abundant, widespread noncoding DNA in situ, despite oligotrophic lifestyle.</title>
        <authorList>
            <person name="Walworth N."/>
            <person name="Pfreundt U."/>
            <person name="Nelson W.C."/>
            <person name="Mincer T."/>
            <person name="Heidelberg J.F."/>
            <person name="Fu F."/>
            <person name="Waterbury J.B."/>
            <person name="Glavina del Rio T."/>
            <person name="Goodwin L."/>
            <person name="Kyrpides N.C."/>
            <person name="Land M.L."/>
            <person name="Woyke T."/>
            <person name="Hutchins D.A."/>
            <person name="Hess W.R."/>
            <person name="Webb E.A."/>
        </authorList>
    </citation>
    <scope>NUCLEOTIDE SEQUENCE [LARGE SCALE GENOMIC DNA]</scope>
    <source>
        <strain>IMS101</strain>
    </source>
</reference>
<proteinExistence type="inferred from homology"/>
<protein>
    <recommendedName>
        <fullName evidence="1">Adenine phosphoribosyltransferase</fullName>
        <shortName evidence="1">APRT</shortName>
        <ecNumber evidence="1">2.4.2.7</ecNumber>
    </recommendedName>
</protein>